<keyword id="KW-0067">ATP-binding</keyword>
<keyword id="KW-0963">Cytoplasm</keyword>
<keyword id="KW-0418">Kinase</keyword>
<keyword id="KW-0545">Nucleotide biosynthesis</keyword>
<keyword id="KW-0547">Nucleotide-binding</keyword>
<keyword id="KW-0808">Transferase</keyword>
<organism>
    <name type="scientific">Haemophilus influenzae (strain PittEE)</name>
    <dbReference type="NCBI Taxonomy" id="374930"/>
    <lineage>
        <taxon>Bacteria</taxon>
        <taxon>Pseudomonadati</taxon>
        <taxon>Pseudomonadota</taxon>
        <taxon>Gammaproteobacteria</taxon>
        <taxon>Pasteurellales</taxon>
        <taxon>Pasteurellaceae</taxon>
        <taxon>Haemophilus</taxon>
    </lineage>
</organism>
<feature type="chain" id="PRO_1000058835" description="Adenylate kinase">
    <location>
        <begin position="1"/>
        <end position="214"/>
    </location>
</feature>
<feature type="region of interest" description="NMP" evidence="1">
    <location>
        <begin position="30"/>
        <end position="59"/>
    </location>
</feature>
<feature type="region of interest" description="LID" evidence="1">
    <location>
        <begin position="122"/>
        <end position="159"/>
    </location>
</feature>
<feature type="binding site" evidence="1">
    <location>
        <begin position="10"/>
        <end position="15"/>
    </location>
    <ligand>
        <name>ATP</name>
        <dbReference type="ChEBI" id="CHEBI:30616"/>
    </ligand>
</feature>
<feature type="binding site" evidence="1">
    <location>
        <position position="31"/>
    </location>
    <ligand>
        <name>AMP</name>
        <dbReference type="ChEBI" id="CHEBI:456215"/>
    </ligand>
</feature>
<feature type="binding site" evidence="1">
    <location>
        <position position="36"/>
    </location>
    <ligand>
        <name>AMP</name>
        <dbReference type="ChEBI" id="CHEBI:456215"/>
    </ligand>
</feature>
<feature type="binding site" evidence="1">
    <location>
        <begin position="57"/>
        <end position="59"/>
    </location>
    <ligand>
        <name>AMP</name>
        <dbReference type="ChEBI" id="CHEBI:456215"/>
    </ligand>
</feature>
<feature type="binding site" evidence="1">
    <location>
        <begin position="85"/>
        <end position="88"/>
    </location>
    <ligand>
        <name>AMP</name>
        <dbReference type="ChEBI" id="CHEBI:456215"/>
    </ligand>
</feature>
<feature type="binding site" evidence="1">
    <location>
        <position position="92"/>
    </location>
    <ligand>
        <name>AMP</name>
        <dbReference type="ChEBI" id="CHEBI:456215"/>
    </ligand>
</feature>
<feature type="binding site" evidence="1">
    <location>
        <position position="123"/>
    </location>
    <ligand>
        <name>ATP</name>
        <dbReference type="ChEBI" id="CHEBI:30616"/>
    </ligand>
</feature>
<feature type="binding site" evidence="1">
    <location>
        <begin position="132"/>
        <end position="133"/>
    </location>
    <ligand>
        <name>ATP</name>
        <dbReference type="ChEBI" id="CHEBI:30616"/>
    </ligand>
</feature>
<feature type="binding site" evidence="1">
    <location>
        <position position="156"/>
    </location>
    <ligand>
        <name>AMP</name>
        <dbReference type="ChEBI" id="CHEBI:456215"/>
    </ligand>
</feature>
<feature type="binding site" evidence="1">
    <location>
        <position position="167"/>
    </location>
    <ligand>
        <name>AMP</name>
        <dbReference type="ChEBI" id="CHEBI:456215"/>
    </ligand>
</feature>
<feature type="binding site" evidence="1">
    <location>
        <position position="200"/>
    </location>
    <ligand>
        <name>ATP</name>
        <dbReference type="ChEBI" id="CHEBI:30616"/>
    </ligand>
</feature>
<protein>
    <recommendedName>
        <fullName evidence="1">Adenylate kinase</fullName>
        <shortName evidence="1">AK</shortName>
        <ecNumber evidence="1">2.7.4.3</ecNumber>
    </recommendedName>
    <alternativeName>
        <fullName evidence="1">ATP-AMP transphosphorylase</fullName>
    </alternativeName>
    <alternativeName>
        <fullName evidence="1">ATP:AMP phosphotransferase</fullName>
    </alternativeName>
    <alternativeName>
        <fullName evidence="1">Adenylate monophosphate kinase</fullName>
    </alternativeName>
</protein>
<sequence>MKIILLGAPGAGKGTQAQFIMNKFGIPQISTGDMFRAAIKAGTELGKQAKALMDEGKLVPDELTVALVKDRIAQADCANGFLLDGFPRTIPQADALKDSGVKIDFVLEFDVPDEVIVERMSGRRVHQTSGRSYHIVYNPPKVEGKDDVTGEDLIIRADDKPETVLDRLAVYHKQTSPLIDYYQAEAKAGNTQYFRLDGTQKVEEVSQELDKILG</sequence>
<gene>
    <name evidence="1" type="primary">adk</name>
    <name type="ordered locus">CGSHiEE_01255</name>
</gene>
<name>KAD_HAEIE</name>
<dbReference type="EC" id="2.7.4.3" evidence="1"/>
<dbReference type="EMBL" id="CP000671">
    <property type="protein sequence ID" value="ABQ97737.1"/>
    <property type="molecule type" value="Genomic_DNA"/>
</dbReference>
<dbReference type="SMR" id="A5UAD6"/>
<dbReference type="KEGG" id="hip:CGSHiEE_01255"/>
<dbReference type="HOGENOM" id="CLU_032354_1_2_6"/>
<dbReference type="UniPathway" id="UPA00588">
    <property type="reaction ID" value="UER00649"/>
</dbReference>
<dbReference type="GO" id="GO:0005737">
    <property type="term" value="C:cytoplasm"/>
    <property type="evidence" value="ECO:0007669"/>
    <property type="project" value="UniProtKB-SubCell"/>
</dbReference>
<dbReference type="GO" id="GO:0004017">
    <property type="term" value="F:adenylate kinase activity"/>
    <property type="evidence" value="ECO:0007669"/>
    <property type="project" value="UniProtKB-UniRule"/>
</dbReference>
<dbReference type="GO" id="GO:0005524">
    <property type="term" value="F:ATP binding"/>
    <property type="evidence" value="ECO:0007669"/>
    <property type="project" value="UniProtKB-UniRule"/>
</dbReference>
<dbReference type="GO" id="GO:0044209">
    <property type="term" value="P:AMP salvage"/>
    <property type="evidence" value="ECO:0007669"/>
    <property type="project" value="UniProtKB-UniRule"/>
</dbReference>
<dbReference type="CDD" id="cd01428">
    <property type="entry name" value="ADK"/>
    <property type="match status" value="1"/>
</dbReference>
<dbReference type="FunFam" id="3.40.50.300:FF:000106">
    <property type="entry name" value="Adenylate kinase mitochondrial"/>
    <property type="match status" value="1"/>
</dbReference>
<dbReference type="Gene3D" id="3.40.50.300">
    <property type="entry name" value="P-loop containing nucleotide triphosphate hydrolases"/>
    <property type="match status" value="1"/>
</dbReference>
<dbReference type="HAMAP" id="MF_00235">
    <property type="entry name" value="Adenylate_kinase_Adk"/>
    <property type="match status" value="1"/>
</dbReference>
<dbReference type="InterPro" id="IPR006259">
    <property type="entry name" value="Adenyl_kin_sub"/>
</dbReference>
<dbReference type="InterPro" id="IPR000850">
    <property type="entry name" value="Adenylat/UMP-CMP_kin"/>
</dbReference>
<dbReference type="InterPro" id="IPR033690">
    <property type="entry name" value="Adenylat_kinase_CS"/>
</dbReference>
<dbReference type="InterPro" id="IPR007862">
    <property type="entry name" value="Adenylate_kinase_lid-dom"/>
</dbReference>
<dbReference type="InterPro" id="IPR027417">
    <property type="entry name" value="P-loop_NTPase"/>
</dbReference>
<dbReference type="NCBIfam" id="TIGR01351">
    <property type="entry name" value="adk"/>
    <property type="match status" value="1"/>
</dbReference>
<dbReference type="NCBIfam" id="NF001379">
    <property type="entry name" value="PRK00279.1-1"/>
    <property type="match status" value="1"/>
</dbReference>
<dbReference type="NCBIfam" id="NF001380">
    <property type="entry name" value="PRK00279.1-2"/>
    <property type="match status" value="1"/>
</dbReference>
<dbReference type="NCBIfam" id="NF001381">
    <property type="entry name" value="PRK00279.1-3"/>
    <property type="match status" value="1"/>
</dbReference>
<dbReference type="NCBIfam" id="NF011100">
    <property type="entry name" value="PRK14527.1"/>
    <property type="match status" value="1"/>
</dbReference>
<dbReference type="PANTHER" id="PTHR23359">
    <property type="entry name" value="NUCLEOTIDE KINASE"/>
    <property type="match status" value="1"/>
</dbReference>
<dbReference type="Pfam" id="PF00406">
    <property type="entry name" value="ADK"/>
    <property type="match status" value="1"/>
</dbReference>
<dbReference type="Pfam" id="PF05191">
    <property type="entry name" value="ADK_lid"/>
    <property type="match status" value="1"/>
</dbReference>
<dbReference type="PRINTS" id="PR00094">
    <property type="entry name" value="ADENYLTKNASE"/>
</dbReference>
<dbReference type="SUPFAM" id="SSF52540">
    <property type="entry name" value="P-loop containing nucleoside triphosphate hydrolases"/>
    <property type="match status" value="1"/>
</dbReference>
<dbReference type="PROSITE" id="PS00113">
    <property type="entry name" value="ADENYLATE_KINASE"/>
    <property type="match status" value="1"/>
</dbReference>
<comment type="function">
    <text evidence="1">Catalyzes the reversible transfer of the terminal phosphate group between ATP and AMP. Plays an important role in cellular energy homeostasis and in adenine nucleotide metabolism.</text>
</comment>
<comment type="catalytic activity">
    <reaction evidence="1">
        <text>AMP + ATP = 2 ADP</text>
        <dbReference type="Rhea" id="RHEA:12973"/>
        <dbReference type="ChEBI" id="CHEBI:30616"/>
        <dbReference type="ChEBI" id="CHEBI:456215"/>
        <dbReference type="ChEBI" id="CHEBI:456216"/>
        <dbReference type="EC" id="2.7.4.3"/>
    </reaction>
</comment>
<comment type="pathway">
    <text evidence="1">Purine metabolism; AMP biosynthesis via salvage pathway; AMP from ADP: step 1/1.</text>
</comment>
<comment type="subunit">
    <text evidence="1">Monomer.</text>
</comment>
<comment type="subcellular location">
    <subcellularLocation>
        <location evidence="1">Cytoplasm</location>
    </subcellularLocation>
</comment>
<comment type="domain">
    <text evidence="1">Consists of three domains, a large central CORE domain and two small peripheral domains, NMPbind and LID, which undergo movements during catalysis. The LID domain closes over the site of phosphoryl transfer upon ATP binding. Assembling and dissambling the active center during each catalytic cycle provides an effective means to prevent ATP hydrolysis.</text>
</comment>
<comment type="similarity">
    <text evidence="1">Belongs to the adenylate kinase family.</text>
</comment>
<evidence type="ECO:0000255" key="1">
    <source>
        <dbReference type="HAMAP-Rule" id="MF_00235"/>
    </source>
</evidence>
<accession>A5UAD6</accession>
<reference key="1">
    <citation type="journal article" date="2007" name="Genome Biol.">
        <title>Characterization and modeling of the Haemophilus influenzae core and supragenomes based on the complete genomic sequences of Rd and 12 clinical nontypeable strains.</title>
        <authorList>
            <person name="Hogg J.S."/>
            <person name="Hu F.Z."/>
            <person name="Janto B."/>
            <person name="Boissy R."/>
            <person name="Hayes J."/>
            <person name="Keefe R."/>
            <person name="Post J.C."/>
            <person name="Ehrlich G.D."/>
        </authorList>
    </citation>
    <scope>NUCLEOTIDE SEQUENCE [LARGE SCALE GENOMIC DNA]</scope>
    <source>
        <strain>PittEE</strain>
    </source>
</reference>
<proteinExistence type="inferred from homology"/>